<proteinExistence type="inferred from homology"/>
<accession>A6LW30</accession>
<organism>
    <name type="scientific">Clostridium beijerinckii (strain ATCC 51743 / NCIMB 8052)</name>
    <name type="common">Clostridium acetobutylicum</name>
    <dbReference type="NCBI Taxonomy" id="290402"/>
    <lineage>
        <taxon>Bacteria</taxon>
        <taxon>Bacillati</taxon>
        <taxon>Bacillota</taxon>
        <taxon>Clostridia</taxon>
        <taxon>Eubacteriales</taxon>
        <taxon>Clostridiaceae</taxon>
        <taxon>Clostridium</taxon>
    </lineage>
</organism>
<reference key="1">
    <citation type="submission" date="2007-06" db="EMBL/GenBank/DDBJ databases">
        <title>Complete sequence of Clostridium beijerinckii NCIMB 8052.</title>
        <authorList>
            <consortium name="US DOE Joint Genome Institute"/>
            <person name="Copeland A."/>
            <person name="Lucas S."/>
            <person name="Lapidus A."/>
            <person name="Barry K."/>
            <person name="Detter J.C."/>
            <person name="Glavina del Rio T."/>
            <person name="Hammon N."/>
            <person name="Israni S."/>
            <person name="Dalin E."/>
            <person name="Tice H."/>
            <person name="Pitluck S."/>
            <person name="Sims D."/>
            <person name="Brettin T."/>
            <person name="Bruce D."/>
            <person name="Tapia R."/>
            <person name="Brainard J."/>
            <person name="Schmutz J."/>
            <person name="Larimer F."/>
            <person name="Land M."/>
            <person name="Hauser L."/>
            <person name="Kyrpides N."/>
            <person name="Mikhailova N."/>
            <person name="Bennet G."/>
            <person name="Cann I."/>
            <person name="Chen J.-S."/>
            <person name="Contreras A.L."/>
            <person name="Jones D."/>
            <person name="Kashket E."/>
            <person name="Mitchell W."/>
            <person name="Stoddard S."/>
            <person name="Schwarz W."/>
            <person name="Qureshi N."/>
            <person name="Young M."/>
            <person name="Shi Z."/>
            <person name="Ezeji T."/>
            <person name="White B."/>
            <person name="Blaschek H."/>
            <person name="Richardson P."/>
        </authorList>
    </citation>
    <scope>NUCLEOTIDE SEQUENCE [LARGE SCALE GENOMIC DNA]</scope>
    <source>
        <strain>ATCC 51743 / NCIMB 8052</strain>
    </source>
</reference>
<gene>
    <name evidence="1" type="primary">recX</name>
    <name type="ordered locus">Cbei_2402</name>
</gene>
<comment type="function">
    <text evidence="1">Modulates RecA activity.</text>
</comment>
<comment type="subcellular location">
    <subcellularLocation>
        <location evidence="1">Cytoplasm</location>
    </subcellularLocation>
</comment>
<comment type="similarity">
    <text evidence="1">Belongs to the RecX family.</text>
</comment>
<sequence length="213" mass="25111">MAKMTKIEIQKRNKERVNLFLDGEYAFSISAELVYKESLKVNSEINPEKLRTLAESENFMRCKESALRIIEKTYKTEKEVRDKLKLKEYDESSIDKAIEFLKKYNFINDGNYTKIFIKDKLRSMGSQKIKYTLLRKGICKEIIDEELLNLDKENEKDVAFDIAQKKYNLIKNKETDTYKISGKLYRYLISKGYNTEVTSQVIKKVMAVDVDDF</sequence>
<dbReference type="EMBL" id="CP000721">
    <property type="protein sequence ID" value="ABR34560.1"/>
    <property type="molecule type" value="Genomic_DNA"/>
</dbReference>
<dbReference type="RefSeq" id="WP_012058616.1">
    <property type="nucleotide sequence ID" value="NC_009617.1"/>
</dbReference>
<dbReference type="SMR" id="A6LW30"/>
<dbReference type="KEGG" id="cbe:Cbei_2402"/>
<dbReference type="eggNOG" id="COG2137">
    <property type="taxonomic scope" value="Bacteria"/>
</dbReference>
<dbReference type="HOGENOM" id="CLU_066607_4_1_9"/>
<dbReference type="Proteomes" id="UP000000565">
    <property type="component" value="Chromosome"/>
</dbReference>
<dbReference type="GO" id="GO:0005737">
    <property type="term" value="C:cytoplasm"/>
    <property type="evidence" value="ECO:0007669"/>
    <property type="project" value="UniProtKB-SubCell"/>
</dbReference>
<dbReference type="GO" id="GO:0006282">
    <property type="term" value="P:regulation of DNA repair"/>
    <property type="evidence" value="ECO:0007669"/>
    <property type="project" value="UniProtKB-UniRule"/>
</dbReference>
<dbReference type="Gene3D" id="1.10.10.10">
    <property type="entry name" value="Winged helix-like DNA-binding domain superfamily/Winged helix DNA-binding domain"/>
    <property type="match status" value="3"/>
</dbReference>
<dbReference type="HAMAP" id="MF_01114">
    <property type="entry name" value="RecX"/>
    <property type="match status" value="1"/>
</dbReference>
<dbReference type="InterPro" id="IPR053926">
    <property type="entry name" value="RecX_HTH_1st"/>
</dbReference>
<dbReference type="InterPro" id="IPR053924">
    <property type="entry name" value="RecX_HTH_2nd"/>
</dbReference>
<dbReference type="InterPro" id="IPR053925">
    <property type="entry name" value="RecX_HTH_3rd"/>
</dbReference>
<dbReference type="InterPro" id="IPR003783">
    <property type="entry name" value="Regulatory_RecX"/>
</dbReference>
<dbReference type="InterPro" id="IPR036388">
    <property type="entry name" value="WH-like_DNA-bd_sf"/>
</dbReference>
<dbReference type="NCBIfam" id="NF001058">
    <property type="entry name" value="PRK00117.4-1"/>
    <property type="match status" value="1"/>
</dbReference>
<dbReference type="PANTHER" id="PTHR33602">
    <property type="entry name" value="REGULATORY PROTEIN RECX FAMILY PROTEIN"/>
    <property type="match status" value="1"/>
</dbReference>
<dbReference type="PANTHER" id="PTHR33602:SF1">
    <property type="entry name" value="REGULATORY PROTEIN RECX FAMILY PROTEIN"/>
    <property type="match status" value="1"/>
</dbReference>
<dbReference type="Pfam" id="PF21982">
    <property type="entry name" value="RecX_HTH1"/>
    <property type="match status" value="1"/>
</dbReference>
<dbReference type="Pfam" id="PF02631">
    <property type="entry name" value="RecX_HTH2"/>
    <property type="match status" value="1"/>
</dbReference>
<dbReference type="Pfam" id="PF21981">
    <property type="entry name" value="RecX_HTH3"/>
    <property type="match status" value="1"/>
</dbReference>
<name>RECX_CLOB8</name>
<protein>
    <recommendedName>
        <fullName evidence="1">Regulatory protein RecX</fullName>
    </recommendedName>
</protein>
<keyword id="KW-0963">Cytoplasm</keyword>
<feature type="chain" id="PRO_1000084978" description="Regulatory protein RecX">
    <location>
        <begin position="1"/>
        <end position="213"/>
    </location>
</feature>
<evidence type="ECO:0000255" key="1">
    <source>
        <dbReference type="HAMAP-Rule" id="MF_01114"/>
    </source>
</evidence>